<protein>
    <recommendedName>
        <fullName evidence="1">Xaa-Pro dipeptidyl-peptidase</fullName>
        <ecNumber evidence="1">3.4.14.11</ecNumber>
    </recommendedName>
    <alternativeName>
        <fullName evidence="1">X-Pro dipeptidyl-peptidase</fullName>
    </alternativeName>
    <alternativeName>
        <fullName evidence="1">X-prolyl-dipeptidyl aminopeptidase</fullName>
        <shortName evidence="1">X-PDAP</shortName>
    </alternativeName>
</protein>
<proteinExistence type="inferred from homology"/>
<comment type="function">
    <text evidence="1">Removes N-terminal dipeptides sequentially from polypeptides having unsubstituted N-termini provided that the penultimate residue is proline.</text>
</comment>
<comment type="catalytic activity">
    <reaction evidence="1">
        <text>Hydrolyzes Xaa-Pro-|- bonds to release unblocked, N-terminal dipeptides from substrates including Ala-Pro-|-p-nitroanilide and (sequentially) Tyr-Pro-|-Phe-Pro-|-Gly-Pro-|-Ile.</text>
        <dbReference type="EC" id="3.4.14.11"/>
    </reaction>
</comment>
<comment type="subunit">
    <text evidence="1">Homodimer.</text>
</comment>
<comment type="subcellular location">
    <subcellularLocation>
        <location evidence="1">Cytoplasm</location>
    </subcellularLocation>
</comment>
<comment type="similarity">
    <text evidence="1">Belongs to the peptidase S15 family.</text>
</comment>
<keyword id="KW-0031">Aminopeptidase</keyword>
<keyword id="KW-0963">Cytoplasm</keyword>
<keyword id="KW-0378">Hydrolase</keyword>
<keyword id="KW-0645">Protease</keyword>
<keyword id="KW-1185">Reference proteome</keyword>
<keyword id="KW-0720">Serine protease</keyword>
<feature type="chain" id="PRO_1000083193" description="Xaa-Pro dipeptidyl-peptidase">
    <location>
        <begin position="1"/>
        <end position="759"/>
    </location>
</feature>
<feature type="active site" description="Charge relay system" evidence="1">
    <location>
        <position position="347"/>
    </location>
</feature>
<feature type="active site" description="Charge relay system" evidence="1">
    <location>
        <position position="467"/>
    </location>
</feature>
<feature type="active site" description="Charge relay system" evidence="1">
    <location>
        <position position="497"/>
    </location>
</feature>
<gene>
    <name evidence="1" type="primary">pepX</name>
    <name type="ordered locus">SGO_0234</name>
</gene>
<evidence type="ECO:0000255" key="1">
    <source>
        <dbReference type="HAMAP-Rule" id="MF_00698"/>
    </source>
</evidence>
<name>PEPX_STRGC</name>
<organism>
    <name type="scientific">Streptococcus gordonii (strain Challis / ATCC 35105 / BCRC 15272 / CH1 / DL1 / V288)</name>
    <dbReference type="NCBI Taxonomy" id="467705"/>
    <lineage>
        <taxon>Bacteria</taxon>
        <taxon>Bacillati</taxon>
        <taxon>Bacillota</taxon>
        <taxon>Bacilli</taxon>
        <taxon>Lactobacillales</taxon>
        <taxon>Streptococcaceae</taxon>
        <taxon>Streptococcus</taxon>
    </lineage>
</organism>
<accession>A8AUU3</accession>
<dbReference type="EC" id="3.4.14.11" evidence="1"/>
<dbReference type="EMBL" id="CP000725">
    <property type="protein sequence ID" value="ABV10773.1"/>
    <property type="molecule type" value="Genomic_DNA"/>
</dbReference>
<dbReference type="RefSeq" id="WP_011999765.1">
    <property type="nucleotide sequence ID" value="NC_009785.1"/>
</dbReference>
<dbReference type="SMR" id="A8AUU3"/>
<dbReference type="STRING" id="467705.SGO_0234"/>
<dbReference type="ESTHER" id="strgo-Q93M42">
    <property type="family name" value="Lactobacillus_peptidase"/>
</dbReference>
<dbReference type="KEGG" id="sgo:SGO_0234"/>
<dbReference type="eggNOG" id="COG2936">
    <property type="taxonomic scope" value="Bacteria"/>
</dbReference>
<dbReference type="HOGENOM" id="CLU_011800_0_0_9"/>
<dbReference type="Proteomes" id="UP000001131">
    <property type="component" value="Chromosome"/>
</dbReference>
<dbReference type="GO" id="GO:0005737">
    <property type="term" value="C:cytoplasm"/>
    <property type="evidence" value="ECO:0007669"/>
    <property type="project" value="UniProtKB-SubCell"/>
</dbReference>
<dbReference type="GO" id="GO:0004177">
    <property type="term" value="F:aminopeptidase activity"/>
    <property type="evidence" value="ECO:0007669"/>
    <property type="project" value="UniProtKB-KW"/>
</dbReference>
<dbReference type="GO" id="GO:0008239">
    <property type="term" value="F:dipeptidyl-peptidase activity"/>
    <property type="evidence" value="ECO:0007669"/>
    <property type="project" value="UniProtKB-UniRule"/>
</dbReference>
<dbReference type="GO" id="GO:0008236">
    <property type="term" value="F:serine-type peptidase activity"/>
    <property type="evidence" value="ECO:0007669"/>
    <property type="project" value="UniProtKB-KW"/>
</dbReference>
<dbReference type="GO" id="GO:0006508">
    <property type="term" value="P:proteolysis"/>
    <property type="evidence" value="ECO:0007669"/>
    <property type="project" value="UniProtKB-KW"/>
</dbReference>
<dbReference type="Gene3D" id="1.10.246.70">
    <property type="match status" value="1"/>
</dbReference>
<dbReference type="Gene3D" id="3.40.50.1820">
    <property type="entry name" value="alpha/beta hydrolase"/>
    <property type="match status" value="1"/>
</dbReference>
<dbReference type="Gene3D" id="2.60.120.260">
    <property type="entry name" value="Galactose-binding domain-like"/>
    <property type="match status" value="1"/>
</dbReference>
<dbReference type="HAMAP" id="MF_00698">
    <property type="entry name" value="Aminopeptidase_S15"/>
    <property type="match status" value="1"/>
</dbReference>
<dbReference type="InterPro" id="IPR029058">
    <property type="entry name" value="AB_hydrolase_fold"/>
</dbReference>
<dbReference type="InterPro" id="IPR008979">
    <property type="entry name" value="Galactose-bd-like_sf"/>
</dbReference>
<dbReference type="InterPro" id="IPR008252">
    <property type="entry name" value="Pept_S15_Xpro"/>
</dbReference>
<dbReference type="InterPro" id="IPR015251">
    <property type="entry name" value="PepX_N_dom"/>
</dbReference>
<dbReference type="InterPro" id="IPR036313">
    <property type="entry name" value="PepX_N_dom_sf"/>
</dbReference>
<dbReference type="InterPro" id="IPR000383">
    <property type="entry name" value="Xaa-Pro-like_dom"/>
</dbReference>
<dbReference type="InterPro" id="IPR013736">
    <property type="entry name" value="Xaa-Pro_dipept_C"/>
</dbReference>
<dbReference type="InterPro" id="IPR050585">
    <property type="entry name" value="Xaa-Pro_dipeptidyl-ppase/CocE"/>
</dbReference>
<dbReference type="NCBIfam" id="NF003783">
    <property type="entry name" value="PRK05371.1-4"/>
    <property type="match status" value="1"/>
</dbReference>
<dbReference type="PANTHER" id="PTHR43056:SF10">
    <property type="entry name" value="COCE_NOND FAMILY, PUTATIVE (AFU_ORTHOLOGUE AFUA_7G00600)-RELATED"/>
    <property type="match status" value="1"/>
</dbReference>
<dbReference type="PANTHER" id="PTHR43056">
    <property type="entry name" value="PEPTIDASE S9 PROLYL OLIGOPEPTIDASE"/>
    <property type="match status" value="1"/>
</dbReference>
<dbReference type="Pfam" id="PF02129">
    <property type="entry name" value="Peptidase_S15"/>
    <property type="match status" value="1"/>
</dbReference>
<dbReference type="Pfam" id="PF08530">
    <property type="entry name" value="PepX_C"/>
    <property type="match status" value="1"/>
</dbReference>
<dbReference type="Pfam" id="PF09168">
    <property type="entry name" value="PepX_N"/>
    <property type="match status" value="1"/>
</dbReference>
<dbReference type="PRINTS" id="PR00923">
    <property type="entry name" value="LACTOPTASE"/>
</dbReference>
<dbReference type="SMART" id="SM00939">
    <property type="entry name" value="PepX_C"/>
    <property type="match status" value="1"/>
</dbReference>
<dbReference type="SMART" id="SM00940">
    <property type="entry name" value="PepX_N"/>
    <property type="match status" value="1"/>
</dbReference>
<dbReference type="SUPFAM" id="SSF53474">
    <property type="entry name" value="alpha/beta-Hydrolases"/>
    <property type="match status" value="1"/>
</dbReference>
<dbReference type="SUPFAM" id="SSF49785">
    <property type="entry name" value="Galactose-binding domain-like"/>
    <property type="match status" value="1"/>
</dbReference>
<dbReference type="SUPFAM" id="SSF81761">
    <property type="entry name" value="X-Prolyl dipeptidyl aminopeptidase PepX, N-terminal domain"/>
    <property type="match status" value="1"/>
</dbReference>
<reference key="1">
    <citation type="journal article" date="2007" name="J. Bacteriol.">
        <title>Genome-wide transcriptional changes in Streptococcus gordonii in response to competence signaling peptide.</title>
        <authorList>
            <person name="Vickerman M.M."/>
            <person name="Iobst S."/>
            <person name="Jesionowski A.M."/>
            <person name="Gill S.R."/>
        </authorList>
    </citation>
    <scope>NUCLEOTIDE SEQUENCE [LARGE SCALE GENOMIC DNA]</scope>
    <source>
        <strain>Challis / ATCC 35105 / BCRC 15272 / CH1 / DL1 / V288</strain>
    </source>
</reference>
<sequence length="759" mass="87244">MRYNQYSYTKASEEVMLDELARLGFTIQTTNSPKENLHHFLQKILFRYQDVNYVLSSWVADQKTDLLTFFQSDKQLTEEVFYTVALQVLGFAPFVDFDDVTAFCKEIHFPITYGNILENLYQLLNTRTKLGNTLIDQLVSEGFIPESNDYHFFNGKSLATFSSHEAIREVVYVESRVDTDGDGKPDLVKVSIIRPSYEGQVPAVMTASPYHQGTNDKASDKALHNMNVDLSCKNPRTITVQESSIQTIEPQGQASLVEKAEEKLGHIGSYTLNDYLLPRGFANLYVSGVGTKDSEGMMTSGDYQQIEAYKNVIDWLNGRCRAFTDHTRQREIKATWSNGKVATTGISYLGTMSNGLATTGVDGLEVIIAEAGISSWYNYYRENGLVTSPGGYPGEDFESLTELTYSRNLLAGEYLRHNQAYQAYLDQQRKDLERETGDYNQFWHDRNYLIHADKVKAEVVFTHGSQDWNVKPLHVYNMFHALPAHIKKHLFFHNGAHVYINNWQSIDFRESMNALLSKKLLGHSSDFDLPPVIWQDNSQAQNWMSLDDFGNQEDYSHFHLGKGSQEIRNRYSDEDYNRFAKSYQVFKNELFEGKTQQITLDWTLEQDLFINGPAKLKLRLKSSTNKGLISAQLLDYWPAKRLTPIPSLLEPRVMDNGRYYMLDNLMELPFADTPHRVITKGFLNLQNRTDLLTVEEVVPNQWMELSFELQPTIYKLKKGDQLRLVLYTTDFEHTVRDKTDYHLSVDMEHSSLSLPHKKS</sequence>